<dbReference type="SMR" id="P80450"/>
<dbReference type="GO" id="GO:0008289">
    <property type="term" value="F:lipid binding"/>
    <property type="evidence" value="ECO:0007669"/>
    <property type="project" value="UniProtKB-KW"/>
</dbReference>
<dbReference type="GO" id="GO:0006869">
    <property type="term" value="P:lipid transport"/>
    <property type="evidence" value="ECO:0007669"/>
    <property type="project" value="InterPro"/>
</dbReference>
<dbReference type="CDD" id="cd01960">
    <property type="entry name" value="nsLTP1"/>
    <property type="match status" value="1"/>
</dbReference>
<dbReference type="Gene3D" id="1.10.110.10">
    <property type="entry name" value="Plant lipid-transfer and hydrophobic proteins"/>
    <property type="match status" value="1"/>
</dbReference>
<dbReference type="InterPro" id="IPR036312">
    <property type="entry name" value="Bifun_inhib/LTP/seed_sf"/>
</dbReference>
<dbReference type="InterPro" id="IPR016140">
    <property type="entry name" value="Bifunc_inhib/LTP/seed_store"/>
</dbReference>
<dbReference type="InterPro" id="IPR000528">
    <property type="entry name" value="Plant_nsLTP"/>
</dbReference>
<dbReference type="PANTHER" id="PTHR33076">
    <property type="entry name" value="NON-SPECIFIC LIPID-TRANSFER PROTEIN 2-RELATED"/>
    <property type="match status" value="1"/>
</dbReference>
<dbReference type="Pfam" id="PF00234">
    <property type="entry name" value="Tryp_alpha_amyl"/>
    <property type="match status" value="1"/>
</dbReference>
<dbReference type="PRINTS" id="PR00382">
    <property type="entry name" value="LIPIDTRNSFER"/>
</dbReference>
<dbReference type="SMART" id="SM00499">
    <property type="entry name" value="AAI"/>
    <property type="match status" value="1"/>
</dbReference>
<dbReference type="SUPFAM" id="SSF47699">
    <property type="entry name" value="Bifunctional inhibitor/lipid-transfer protein/seed storage 2S albumin"/>
    <property type="match status" value="1"/>
</dbReference>
<dbReference type="PROSITE" id="PS00597">
    <property type="entry name" value="PLANT_LTP"/>
    <property type="match status" value="1"/>
</dbReference>
<name>NLTP_AMACA</name>
<feature type="chain" id="PRO_0000153867" description="Non-specific lipid-transfer protein">
    <location>
        <begin position="1"/>
        <end position="94"/>
    </location>
</feature>
<feature type="disulfide bond" evidence="2">
    <location>
        <begin position="4"/>
        <end position="53"/>
    </location>
</feature>
<feature type="disulfide bond" evidence="2">
    <location>
        <begin position="14"/>
        <end position="30"/>
    </location>
</feature>
<feature type="disulfide bond" evidence="2">
    <location>
        <begin position="31"/>
        <end position="76"/>
    </location>
</feature>
<feature type="disulfide bond" evidence="2">
    <location>
        <begin position="51"/>
        <end position="90"/>
    </location>
</feature>
<proteinExistence type="evidence at protein level"/>
<accession>P80450</accession>
<sequence>AVTCTVVTKALGPCMTYLKGTGATPPPANCCAGVRSLKAAAQTVADRRMACNCMKSAAQKTKSLNYKVAARLASQCGVRMSYSVSPNVNCNSVQ</sequence>
<organism>
    <name type="scientific">Amaranthus caudatus</name>
    <name type="common">Love-lies-bleeding</name>
    <name type="synonym">Inca-wheat</name>
    <dbReference type="NCBI Taxonomy" id="3567"/>
    <lineage>
        <taxon>Eukaryota</taxon>
        <taxon>Viridiplantae</taxon>
        <taxon>Streptophyta</taxon>
        <taxon>Embryophyta</taxon>
        <taxon>Tracheophyta</taxon>
        <taxon>Spermatophyta</taxon>
        <taxon>Magnoliopsida</taxon>
        <taxon>eudicotyledons</taxon>
        <taxon>Gunneridae</taxon>
        <taxon>Pentapetalae</taxon>
        <taxon>Caryophyllales</taxon>
        <taxon>Amaranthaceae</taxon>
        <taxon>Amaranthus</taxon>
    </lineage>
</organism>
<protein>
    <recommendedName>
        <fullName>Non-specific lipid-transfer protein</fullName>
        <shortName>LTP</shortName>
    </recommendedName>
    <alternativeName>
        <fullName>Phospholipid transfer protein</fullName>
        <shortName>PLTP</shortName>
    </alternativeName>
</protein>
<reference key="1">
    <citation type="submission" date="1995-05" db="UniProtKB">
        <authorList>
            <person name="Hejgaard J."/>
        </authorList>
    </citation>
    <scope>PROTEIN SEQUENCE</scope>
    <source>
        <strain>cv. CAC 064</strain>
    </source>
</reference>
<comment type="function">
    <text evidence="1">Plant non-specific lipid-transfer proteins transfer phospholipids as well as galactolipids across membranes. May play a role in wax or cutin deposition in the cell walls of expanding epidermal cells and certain secretory tissues (By similarity).</text>
</comment>
<comment type="similarity">
    <text evidence="3">Belongs to the plant LTP family.</text>
</comment>
<keyword id="KW-0903">Direct protein sequencing</keyword>
<keyword id="KW-1015">Disulfide bond</keyword>
<keyword id="KW-0446">Lipid-binding</keyword>
<keyword id="KW-0813">Transport</keyword>
<evidence type="ECO:0000250" key="1"/>
<evidence type="ECO:0000255" key="2"/>
<evidence type="ECO:0000305" key="3"/>